<protein>
    <recommendedName>
        <fullName evidence="3">Tropinone reductase homolog At2g29340</fullName>
        <ecNumber evidence="3">1.1.1.-</ecNumber>
    </recommendedName>
</protein>
<gene>
    <name evidence="4" type="ordered locus">At2g29340</name>
    <name evidence="5" type="ORF">F16P2.28</name>
</gene>
<name>TRNHB_ARATH</name>
<comment type="alternative products">
    <event type="alternative splicing"/>
    <isoform>
        <id>F4IKM1-1</id>
        <name>1</name>
        <sequence type="displayed"/>
    </isoform>
    <isoform>
        <id>F4IKM1-2</id>
        <name>2</name>
        <sequence type="described" ref="VSP_057496 VSP_057497"/>
    </isoform>
    <isoform>
        <id>F4IKM1-3</id>
        <name>3</name>
        <sequence type="described" ref="VSP_057498"/>
    </isoform>
</comment>
<comment type="similarity">
    <text evidence="3">Belongs to the short-chain dehydrogenases/reductases (SDR) family. SDR65C subfamily.</text>
</comment>
<dbReference type="EC" id="1.1.1.-" evidence="3"/>
<dbReference type="EMBL" id="AC004561">
    <property type="protein sequence ID" value="AAC95204.2"/>
    <property type="molecule type" value="Genomic_DNA"/>
</dbReference>
<dbReference type="EMBL" id="CP002685">
    <property type="protein sequence ID" value="AEC08236.1"/>
    <property type="molecule type" value="Genomic_DNA"/>
</dbReference>
<dbReference type="EMBL" id="CP002685">
    <property type="protein sequence ID" value="AEC08237.1"/>
    <property type="molecule type" value="Genomic_DNA"/>
</dbReference>
<dbReference type="EMBL" id="CP002685">
    <property type="protein sequence ID" value="AEC08238.1"/>
    <property type="molecule type" value="Genomic_DNA"/>
</dbReference>
<dbReference type="EMBL" id="CP002685">
    <property type="protein sequence ID" value="ANM61994.1"/>
    <property type="molecule type" value="Genomic_DNA"/>
</dbReference>
<dbReference type="EMBL" id="AY035093">
    <property type="protein sequence ID" value="AAK59598.1"/>
    <property type="molecule type" value="mRNA"/>
</dbReference>
<dbReference type="EMBL" id="AK316672">
    <property type="protein sequence ID" value="BAH19401.1"/>
    <property type="molecule type" value="mRNA"/>
</dbReference>
<dbReference type="PIR" id="B84695">
    <property type="entry name" value="B84695"/>
</dbReference>
<dbReference type="RefSeq" id="NP_001118409.1">
    <molecule id="F4IKM1-2"/>
    <property type="nucleotide sequence ID" value="NM_001124937.2"/>
</dbReference>
<dbReference type="RefSeq" id="NP_001324177.1">
    <molecule id="F4IKM1-2"/>
    <property type="nucleotide sequence ID" value="NM_001336209.1"/>
</dbReference>
<dbReference type="RefSeq" id="NP_565680.2">
    <molecule id="F4IKM1-1"/>
    <property type="nucleotide sequence ID" value="NM_128488.4"/>
</dbReference>
<dbReference type="RefSeq" id="NP_850131.1">
    <molecule id="F4IKM1-3"/>
    <property type="nucleotide sequence ID" value="NM_179800.3"/>
</dbReference>
<dbReference type="SMR" id="F4IKM1"/>
<dbReference type="FunCoup" id="F4IKM1">
    <property type="interactions" value="98"/>
</dbReference>
<dbReference type="IntAct" id="F4IKM1">
    <property type="interactions" value="1"/>
</dbReference>
<dbReference type="STRING" id="3702.F4IKM1"/>
<dbReference type="PaxDb" id="3702-AT2G29340.1"/>
<dbReference type="ProteomicsDB" id="234326">
    <molecule id="F4IKM1-1"/>
</dbReference>
<dbReference type="EnsemblPlants" id="AT2G29340.1">
    <molecule id="F4IKM1-1"/>
    <property type="protein sequence ID" value="AT2G29340.1"/>
    <property type="gene ID" value="AT2G29340"/>
</dbReference>
<dbReference type="EnsemblPlants" id="AT2G29340.2">
    <molecule id="F4IKM1-3"/>
    <property type="protein sequence ID" value="AT2G29340.2"/>
    <property type="gene ID" value="AT2G29340"/>
</dbReference>
<dbReference type="EnsemblPlants" id="AT2G29340.3">
    <molecule id="F4IKM1-2"/>
    <property type="protein sequence ID" value="AT2G29340.3"/>
    <property type="gene ID" value="AT2G29340"/>
</dbReference>
<dbReference type="EnsemblPlants" id="AT2G29340.4">
    <molecule id="F4IKM1-2"/>
    <property type="protein sequence ID" value="AT2G29340.4"/>
    <property type="gene ID" value="AT2G29340"/>
</dbReference>
<dbReference type="GeneID" id="817483"/>
<dbReference type="Gramene" id="AT2G29340.1">
    <molecule id="F4IKM1-1"/>
    <property type="protein sequence ID" value="AT2G29340.1"/>
    <property type="gene ID" value="AT2G29340"/>
</dbReference>
<dbReference type="Gramene" id="AT2G29340.2">
    <molecule id="F4IKM1-3"/>
    <property type="protein sequence ID" value="AT2G29340.2"/>
    <property type="gene ID" value="AT2G29340"/>
</dbReference>
<dbReference type="Gramene" id="AT2G29340.3">
    <molecule id="F4IKM1-2"/>
    <property type="protein sequence ID" value="AT2G29340.3"/>
    <property type="gene ID" value="AT2G29340"/>
</dbReference>
<dbReference type="Gramene" id="AT2G29340.4">
    <molecule id="F4IKM1-2"/>
    <property type="protein sequence ID" value="AT2G29340.4"/>
    <property type="gene ID" value="AT2G29340"/>
</dbReference>
<dbReference type="KEGG" id="ath:AT2G29340"/>
<dbReference type="Araport" id="AT2G29340"/>
<dbReference type="TAIR" id="AT2G29340"/>
<dbReference type="eggNOG" id="KOG0725">
    <property type="taxonomic scope" value="Eukaryota"/>
</dbReference>
<dbReference type="InParanoid" id="F4IKM1"/>
<dbReference type="OMA" id="GIERYTM"/>
<dbReference type="PhylomeDB" id="F4IKM1"/>
<dbReference type="PRO" id="PR:F4IKM1"/>
<dbReference type="Proteomes" id="UP000006548">
    <property type="component" value="Chromosome 2"/>
</dbReference>
<dbReference type="ExpressionAtlas" id="F4IKM1">
    <property type="expression patterns" value="baseline and differential"/>
</dbReference>
<dbReference type="GO" id="GO:0005829">
    <property type="term" value="C:cytosol"/>
    <property type="evidence" value="ECO:0007005"/>
    <property type="project" value="TAIR"/>
</dbReference>
<dbReference type="GO" id="GO:0005777">
    <property type="term" value="C:peroxisome"/>
    <property type="evidence" value="ECO:0007005"/>
    <property type="project" value="TAIR"/>
</dbReference>
<dbReference type="GO" id="GO:0016491">
    <property type="term" value="F:oxidoreductase activity"/>
    <property type="evidence" value="ECO:0007669"/>
    <property type="project" value="UniProtKB-KW"/>
</dbReference>
<dbReference type="FunFam" id="3.40.50.720:FF:000084">
    <property type="entry name" value="Short-chain dehydrogenase reductase"/>
    <property type="match status" value="1"/>
</dbReference>
<dbReference type="Gene3D" id="3.40.50.720">
    <property type="entry name" value="NAD(P)-binding Rossmann-like Domain"/>
    <property type="match status" value="2"/>
</dbReference>
<dbReference type="InterPro" id="IPR036291">
    <property type="entry name" value="NAD(P)-bd_dom_sf"/>
</dbReference>
<dbReference type="InterPro" id="IPR002347">
    <property type="entry name" value="SDR_fam"/>
</dbReference>
<dbReference type="InterPro" id="IPR045000">
    <property type="entry name" value="TR"/>
</dbReference>
<dbReference type="PANTHER" id="PTHR42898:SF6">
    <property type="entry name" value="NADP-DEPENDENT MANNITOL DEHYDROGENASE"/>
    <property type="match status" value="1"/>
</dbReference>
<dbReference type="PANTHER" id="PTHR42898">
    <property type="entry name" value="TROPINONE REDUCTASE"/>
    <property type="match status" value="1"/>
</dbReference>
<dbReference type="Pfam" id="PF13561">
    <property type="entry name" value="adh_short_C2"/>
    <property type="match status" value="1"/>
</dbReference>
<dbReference type="PRINTS" id="PR00081">
    <property type="entry name" value="GDHRDH"/>
</dbReference>
<dbReference type="PRINTS" id="PR00080">
    <property type="entry name" value="SDRFAMILY"/>
</dbReference>
<dbReference type="SUPFAM" id="SSF51735">
    <property type="entry name" value="NAD(P)-binding Rossmann-fold domains"/>
    <property type="match status" value="2"/>
</dbReference>
<reference key="1">
    <citation type="journal article" date="1999" name="Nature">
        <title>Sequence and analysis of chromosome 2 of the plant Arabidopsis thaliana.</title>
        <authorList>
            <person name="Lin X."/>
            <person name="Kaul S."/>
            <person name="Rounsley S.D."/>
            <person name="Shea T.P."/>
            <person name="Benito M.-I."/>
            <person name="Town C.D."/>
            <person name="Fujii C.Y."/>
            <person name="Mason T.M."/>
            <person name="Bowman C.L."/>
            <person name="Barnstead M.E."/>
            <person name="Feldblyum T.V."/>
            <person name="Buell C.R."/>
            <person name="Ketchum K.A."/>
            <person name="Lee J.J."/>
            <person name="Ronning C.M."/>
            <person name="Koo H.L."/>
            <person name="Moffat K.S."/>
            <person name="Cronin L.A."/>
            <person name="Shen M."/>
            <person name="Pai G."/>
            <person name="Van Aken S."/>
            <person name="Umayam L."/>
            <person name="Tallon L.J."/>
            <person name="Gill J.E."/>
            <person name="Adams M.D."/>
            <person name="Carrera A.J."/>
            <person name="Creasy T.H."/>
            <person name="Goodman H.M."/>
            <person name="Somerville C.R."/>
            <person name="Copenhaver G.P."/>
            <person name="Preuss D."/>
            <person name="Nierman W.C."/>
            <person name="White O."/>
            <person name="Eisen J.A."/>
            <person name="Salzberg S.L."/>
            <person name="Fraser C.M."/>
            <person name="Venter J.C."/>
        </authorList>
    </citation>
    <scope>NUCLEOTIDE SEQUENCE [LARGE SCALE GENOMIC DNA]</scope>
    <source>
        <strain>cv. Columbia</strain>
    </source>
</reference>
<reference key="2">
    <citation type="journal article" date="2017" name="Plant J.">
        <title>Araport11: a complete reannotation of the Arabidopsis thaliana reference genome.</title>
        <authorList>
            <person name="Cheng C.Y."/>
            <person name="Krishnakumar V."/>
            <person name="Chan A.P."/>
            <person name="Thibaud-Nissen F."/>
            <person name="Schobel S."/>
            <person name="Town C.D."/>
        </authorList>
    </citation>
    <scope>GENOME REANNOTATION</scope>
    <source>
        <strain evidence="6">cv. Columbia</strain>
    </source>
</reference>
<reference key="3">
    <citation type="journal article" date="2003" name="Science">
        <title>Empirical analysis of transcriptional activity in the Arabidopsis genome.</title>
        <authorList>
            <person name="Yamada K."/>
            <person name="Lim J."/>
            <person name="Dale J.M."/>
            <person name="Chen H."/>
            <person name="Shinn P."/>
            <person name="Palm C.J."/>
            <person name="Southwick A.M."/>
            <person name="Wu H.C."/>
            <person name="Kim C.J."/>
            <person name="Nguyen M."/>
            <person name="Pham P.K."/>
            <person name="Cheuk R.F."/>
            <person name="Karlin-Newmann G."/>
            <person name="Liu S.X."/>
            <person name="Lam B."/>
            <person name="Sakano H."/>
            <person name="Wu T."/>
            <person name="Yu G."/>
            <person name="Miranda M."/>
            <person name="Quach H.L."/>
            <person name="Tripp M."/>
            <person name="Chang C.H."/>
            <person name="Lee J.M."/>
            <person name="Toriumi M.J."/>
            <person name="Chan M.M."/>
            <person name="Tang C.C."/>
            <person name="Onodera C.S."/>
            <person name="Deng J.M."/>
            <person name="Akiyama K."/>
            <person name="Ansari Y."/>
            <person name="Arakawa T."/>
            <person name="Banh J."/>
            <person name="Banno F."/>
            <person name="Bowser L."/>
            <person name="Brooks S.Y."/>
            <person name="Carninci P."/>
            <person name="Chao Q."/>
            <person name="Choy N."/>
            <person name="Enju A."/>
            <person name="Goldsmith A.D."/>
            <person name="Gurjal M."/>
            <person name="Hansen N.F."/>
            <person name="Hayashizaki Y."/>
            <person name="Johnson-Hopson C."/>
            <person name="Hsuan V.W."/>
            <person name="Iida K."/>
            <person name="Karnes M."/>
            <person name="Khan S."/>
            <person name="Koesema E."/>
            <person name="Ishida J."/>
            <person name="Jiang P.X."/>
            <person name="Jones T."/>
            <person name="Kawai J."/>
            <person name="Kamiya A."/>
            <person name="Meyers C."/>
            <person name="Nakajima M."/>
            <person name="Narusaka M."/>
            <person name="Seki M."/>
            <person name="Sakurai T."/>
            <person name="Satou M."/>
            <person name="Tamse R."/>
            <person name="Vaysberg M."/>
            <person name="Wallender E.K."/>
            <person name="Wong C."/>
            <person name="Yamamura Y."/>
            <person name="Yuan S."/>
            <person name="Shinozaki K."/>
            <person name="Davis R.W."/>
            <person name="Theologis A."/>
            <person name="Ecker J.R."/>
        </authorList>
    </citation>
    <scope>NUCLEOTIDE SEQUENCE [LARGE SCALE MRNA] (ISOFORM 2)</scope>
    <source>
        <strain>cv. Columbia</strain>
    </source>
</reference>
<reference key="4">
    <citation type="journal article" date="2009" name="DNA Res.">
        <title>Analysis of multiple occurrences of alternative splicing events in Arabidopsis thaliana using novel sequenced full-length cDNAs.</title>
        <authorList>
            <person name="Iida K."/>
            <person name="Fukami-Kobayashi K."/>
            <person name="Toyoda A."/>
            <person name="Sakaki Y."/>
            <person name="Kobayashi M."/>
            <person name="Seki M."/>
            <person name="Shinozaki K."/>
        </authorList>
    </citation>
    <scope>NUCLEOTIDE SEQUENCE [LARGE SCALE MRNA] (ISOFORM 3)</scope>
    <source>
        <strain>cv. Columbia</strain>
    </source>
</reference>
<reference key="5">
    <citation type="journal article" date="2009" name="Chem. Biol. Interact.">
        <title>The SDR (short-chain dehydrogenase/reductase and related enzymes) nomenclature initiative.</title>
        <authorList>
            <person name="Persson B."/>
            <person name="Kallberg Y."/>
            <person name="Bray J.E."/>
            <person name="Bruford E."/>
            <person name="Dellaporta S.L."/>
            <person name="Favia A.D."/>
            <person name="Duarte R.G."/>
            <person name="Joernvall H."/>
            <person name="Kavanagh K.L."/>
            <person name="Kedishvili N."/>
            <person name="Kisiela M."/>
            <person name="Maser E."/>
            <person name="Mindnich R."/>
            <person name="Orchard S."/>
            <person name="Penning T.M."/>
            <person name="Thornton J.M."/>
            <person name="Adamski J."/>
            <person name="Oppermann U."/>
        </authorList>
    </citation>
    <scope>GENE FAMILY</scope>
    <scope>NOMENCLATURE</scope>
</reference>
<evidence type="ECO:0000250" key="1">
    <source>
        <dbReference type="UniProtKB" id="P50162"/>
    </source>
</evidence>
<evidence type="ECO:0000255" key="2">
    <source>
        <dbReference type="PROSITE-ProRule" id="PRU10001"/>
    </source>
</evidence>
<evidence type="ECO:0000305" key="3"/>
<evidence type="ECO:0000312" key="4">
    <source>
        <dbReference type="Araport" id="AT2G29340"/>
    </source>
</evidence>
<evidence type="ECO:0000312" key="5">
    <source>
        <dbReference type="EMBL" id="AAC95204.2"/>
    </source>
</evidence>
<evidence type="ECO:0000312" key="6">
    <source>
        <dbReference type="Proteomes" id="UP000006548"/>
    </source>
</evidence>
<proteinExistence type="evidence at transcript level"/>
<keyword id="KW-0025">Alternative splicing</keyword>
<keyword id="KW-0521">NADP</keyword>
<keyword id="KW-0560">Oxidoreductase</keyword>
<keyword id="KW-1185">Reference proteome</keyword>
<accession>F4IKM1</accession>
<accession>B9DF84</accession>
<accession>Q94C81</accession>
<accession>Q9ZW17</accession>
<sequence>MDKRWSLKGMTALVTGGASGIGYAIVEELAGFGARIHVCDISEAKLNQSLSEWEKKGFQVSGSVCDVASRPEREELMQTVSSQFDGKLNILVSNVGVIRSKPTTEYTEDDFAFHISSNVEAAYHFSQLSHPLLKASGYGSIIFVSSIAGVISFDAGSIYGLTKGALIQLAKNLACEWAKDGIRANAVAPNVINTPLSQSYLEDVSFKKALLSRTPLGRVGEPNEVASLVAFLCLPAASYITGQTICVDGGLTVNGFSYQPEEALLSRTSLRRVGEPNEVSSLVVFLCLPAASYITGQMVKPFVLMEV</sequence>
<organism evidence="6">
    <name type="scientific">Arabidopsis thaliana</name>
    <name type="common">Mouse-ear cress</name>
    <dbReference type="NCBI Taxonomy" id="3702"/>
    <lineage>
        <taxon>Eukaryota</taxon>
        <taxon>Viridiplantae</taxon>
        <taxon>Streptophyta</taxon>
        <taxon>Embryophyta</taxon>
        <taxon>Tracheophyta</taxon>
        <taxon>Spermatophyta</taxon>
        <taxon>Magnoliopsida</taxon>
        <taxon>eudicotyledons</taxon>
        <taxon>Gunneridae</taxon>
        <taxon>Pentapetalae</taxon>
        <taxon>rosids</taxon>
        <taxon>malvids</taxon>
        <taxon>Brassicales</taxon>
        <taxon>Brassicaceae</taxon>
        <taxon>Camelineae</taxon>
        <taxon>Arabidopsis</taxon>
    </lineage>
</organism>
<feature type="chain" id="PRO_0000432366" description="Tropinone reductase homolog At2g29340">
    <location>
        <begin position="1"/>
        <end position="307"/>
    </location>
</feature>
<feature type="active site" description="Proton acceptor" evidence="2">
    <location>
        <position position="159"/>
    </location>
</feature>
<feature type="binding site" evidence="1">
    <location>
        <begin position="13"/>
        <end position="37"/>
    </location>
    <ligand>
        <name>NADP(+)</name>
        <dbReference type="ChEBI" id="CHEBI:58349"/>
    </ligand>
</feature>
<feature type="binding site" evidence="1">
    <location>
        <position position="146"/>
    </location>
    <ligand>
        <name>substrate</name>
    </ligand>
</feature>
<feature type="splice variant" id="VSP_057496" description="In isoform 2.">
    <original>YLE</original>
    <variation>VIN</variation>
    <location>
        <begin position="200"/>
        <end position="202"/>
    </location>
</feature>
<feature type="splice variant" id="VSP_057497" description="In isoform 2.">
    <location>
        <begin position="203"/>
        <end position="307"/>
    </location>
</feature>
<feature type="splice variant" id="VSP_057498" description="In isoform 3.">
    <location>
        <begin position="261"/>
        <end position="305"/>
    </location>
</feature>